<proteinExistence type="evidence at transcript level"/>
<keyword id="KW-0025">Alternative splicing</keyword>
<keyword id="KW-0217">Developmental protein</keyword>
<keyword id="KW-0238">DNA-binding</keyword>
<keyword id="KW-0479">Metal-binding</keyword>
<keyword id="KW-0539">Nucleus</keyword>
<keyword id="KW-0675">Receptor</keyword>
<keyword id="KW-1185">Reference proteome</keyword>
<keyword id="KW-0804">Transcription</keyword>
<keyword id="KW-0805">Transcription regulation</keyword>
<keyword id="KW-0862">Zinc</keyword>
<keyword id="KW-0863">Zinc-finger</keyword>
<accession>F1QJF4</accession>
<accession>B0JZJ5</accession>
<accession>Q7ZU39</accession>
<reference key="1">
    <citation type="journal article" date="2013" name="Nature">
        <title>The zebrafish reference genome sequence and its relationship to the human genome.</title>
        <authorList>
            <person name="Howe K."/>
            <person name="Clark M.D."/>
            <person name="Torroja C.F."/>
            <person name="Torrance J."/>
            <person name="Berthelot C."/>
            <person name="Muffato M."/>
            <person name="Collins J.E."/>
            <person name="Humphray S."/>
            <person name="McLaren K."/>
            <person name="Matthews L."/>
            <person name="McLaren S."/>
            <person name="Sealy I."/>
            <person name="Caccamo M."/>
            <person name="Churcher C."/>
            <person name="Scott C."/>
            <person name="Barrett J.C."/>
            <person name="Koch R."/>
            <person name="Rauch G.J."/>
            <person name="White S."/>
            <person name="Chow W."/>
            <person name="Kilian B."/>
            <person name="Quintais L.T."/>
            <person name="Guerra-Assuncao J.A."/>
            <person name="Zhou Y."/>
            <person name="Gu Y."/>
            <person name="Yen J."/>
            <person name="Vogel J.H."/>
            <person name="Eyre T."/>
            <person name="Redmond S."/>
            <person name="Banerjee R."/>
            <person name="Chi J."/>
            <person name="Fu B."/>
            <person name="Langley E."/>
            <person name="Maguire S.F."/>
            <person name="Laird G.K."/>
            <person name="Lloyd D."/>
            <person name="Kenyon E."/>
            <person name="Donaldson S."/>
            <person name="Sehra H."/>
            <person name="Almeida-King J."/>
            <person name="Loveland J."/>
            <person name="Trevanion S."/>
            <person name="Jones M."/>
            <person name="Quail M."/>
            <person name="Willey D."/>
            <person name="Hunt A."/>
            <person name="Burton J."/>
            <person name="Sims S."/>
            <person name="McLay K."/>
            <person name="Plumb B."/>
            <person name="Davis J."/>
            <person name="Clee C."/>
            <person name="Oliver K."/>
            <person name="Clark R."/>
            <person name="Riddle C."/>
            <person name="Elliot D."/>
            <person name="Threadgold G."/>
            <person name="Harden G."/>
            <person name="Ware D."/>
            <person name="Begum S."/>
            <person name="Mortimore B."/>
            <person name="Kerry G."/>
            <person name="Heath P."/>
            <person name="Phillimore B."/>
            <person name="Tracey A."/>
            <person name="Corby N."/>
            <person name="Dunn M."/>
            <person name="Johnson C."/>
            <person name="Wood J."/>
            <person name="Clark S."/>
            <person name="Pelan S."/>
            <person name="Griffiths G."/>
            <person name="Smith M."/>
            <person name="Glithero R."/>
            <person name="Howden P."/>
            <person name="Barker N."/>
            <person name="Lloyd C."/>
            <person name="Stevens C."/>
            <person name="Harley J."/>
            <person name="Holt K."/>
            <person name="Panagiotidis G."/>
            <person name="Lovell J."/>
            <person name="Beasley H."/>
            <person name="Henderson C."/>
            <person name="Gordon D."/>
            <person name="Auger K."/>
            <person name="Wright D."/>
            <person name="Collins J."/>
            <person name="Raisen C."/>
            <person name="Dyer L."/>
            <person name="Leung K."/>
            <person name="Robertson L."/>
            <person name="Ambridge K."/>
            <person name="Leongamornlert D."/>
            <person name="McGuire S."/>
            <person name="Gilderthorp R."/>
            <person name="Griffiths C."/>
            <person name="Manthravadi D."/>
            <person name="Nichol S."/>
            <person name="Barker G."/>
            <person name="Whitehead S."/>
            <person name="Kay M."/>
            <person name="Brown J."/>
            <person name="Murnane C."/>
            <person name="Gray E."/>
            <person name="Humphries M."/>
            <person name="Sycamore N."/>
            <person name="Barker D."/>
            <person name="Saunders D."/>
            <person name="Wallis J."/>
            <person name="Babbage A."/>
            <person name="Hammond S."/>
            <person name="Mashreghi-Mohammadi M."/>
            <person name="Barr L."/>
            <person name="Martin S."/>
            <person name="Wray P."/>
            <person name="Ellington A."/>
            <person name="Matthews N."/>
            <person name="Ellwood M."/>
            <person name="Woodmansey R."/>
            <person name="Clark G."/>
            <person name="Cooper J."/>
            <person name="Tromans A."/>
            <person name="Grafham D."/>
            <person name="Skuce C."/>
            <person name="Pandian R."/>
            <person name="Andrews R."/>
            <person name="Harrison E."/>
            <person name="Kimberley A."/>
            <person name="Garnett J."/>
            <person name="Fosker N."/>
            <person name="Hall R."/>
            <person name="Garner P."/>
            <person name="Kelly D."/>
            <person name="Bird C."/>
            <person name="Palmer S."/>
            <person name="Gehring I."/>
            <person name="Berger A."/>
            <person name="Dooley C.M."/>
            <person name="Ersan-Urun Z."/>
            <person name="Eser C."/>
            <person name="Geiger H."/>
            <person name="Geisler M."/>
            <person name="Karotki L."/>
            <person name="Kirn A."/>
            <person name="Konantz J."/>
            <person name="Konantz M."/>
            <person name="Oberlander M."/>
            <person name="Rudolph-Geiger S."/>
            <person name="Teucke M."/>
            <person name="Lanz C."/>
            <person name="Raddatz G."/>
            <person name="Osoegawa K."/>
            <person name="Zhu B."/>
            <person name="Rapp A."/>
            <person name="Widaa S."/>
            <person name="Langford C."/>
            <person name="Yang F."/>
            <person name="Schuster S.C."/>
            <person name="Carter N.P."/>
            <person name="Harrow J."/>
            <person name="Ning Z."/>
            <person name="Herrero J."/>
            <person name="Searle S.M."/>
            <person name="Enright A."/>
            <person name="Geisler R."/>
            <person name="Plasterk R.H."/>
            <person name="Lee C."/>
            <person name="Westerfield M."/>
            <person name="de Jong P.J."/>
            <person name="Zon L.I."/>
            <person name="Postlethwait J.H."/>
            <person name="Nusslein-Volhard C."/>
            <person name="Hubbard T.J."/>
            <person name="Roest Crollius H."/>
            <person name="Rogers J."/>
            <person name="Stemple D.L."/>
        </authorList>
    </citation>
    <scope>NUCLEOTIDE SEQUENCE [LARGE SCALE GENOMIC DNA]</scope>
    <source>
        <strain>Tuebingen</strain>
    </source>
</reference>
<reference key="2">
    <citation type="submission" date="2003-04" db="EMBL/GenBank/DDBJ databases">
        <authorList>
            <consortium name="NIH - Zebrafish Gene Collection (ZGC) project"/>
        </authorList>
    </citation>
    <scope>NUCLEOTIDE SEQUENCE [LARGE SCALE MRNA] (ISOFORMS 1 AND 2)</scope>
    <source>
        <strain>AB</strain>
    </source>
</reference>
<reference key="3">
    <citation type="journal article" date="2007" name="Dev. Dyn.">
        <title>Expression of zebrafish ROR alpha gene in cerebellar-like structures.</title>
        <authorList>
            <person name="Katsuyama Y."/>
            <person name="Oomiya Y."/>
            <person name="Dekimoto H."/>
            <person name="Motooka E."/>
            <person name="Takano A."/>
            <person name="Kikkawa S."/>
            <person name="Hibi M."/>
            <person name="Terashima T."/>
        </authorList>
    </citation>
    <scope>DEVELOPMENTAL STAGE</scope>
</reference>
<feature type="chain" id="PRO_0000445779" description="Nuclear receptor ROR-alpha B">
    <location>
        <begin position="1"/>
        <end position="474"/>
    </location>
</feature>
<feature type="domain" description="NR LBD" evidence="5">
    <location>
        <begin position="223"/>
        <end position="461"/>
    </location>
</feature>
<feature type="DNA-binding region" description="Nuclear receptor" evidence="4">
    <location>
        <begin position="14"/>
        <end position="89"/>
    </location>
</feature>
<feature type="zinc finger region" description="NR C4-type" evidence="4">
    <location>
        <begin position="17"/>
        <end position="37"/>
    </location>
</feature>
<feature type="zinc finger region" description="NR C4-type" evidence="4">
    <location>
        <begin position="53"/>
        <end position="72"/>
    </location>
</feature>
<feature type="region of interest" description="Disordered" evidence="7">
    <location>
        <begin position="98"/>
        <end position="144"/>
    </location>
</feature>
<feature type="region of interest" description="AF-2" evidence="5">
    <location>
        <begin position="450"/>
        <end position="461"/>
    </location>
</feature>
<feature type="compositionally biased region" description="Basic and acidic residues" evidence="7">
    <location>
        <begin position="98"/>
        <end position="124"/>
    </location>
</feature>
<feature type="splice variant" id="VSP_059964" description="In isoform 2." evidence="10">
    <original>EA</original>
    <variation>FMYTAFSQSSPATLCPNGTV</variation>
    <location>
        <begin position="473"/>
        <end position="474"/>
    </location>
</feature>
<feature type="sequence conflict" description="In Ref. 2; AAH51158." evidence="11" ref="2">
    <original>R</original>
    <variation>G</variation>
    <location>
        <position position="43"/>
    </location>
</feature>
<feature type="sequence conflict" description="In Ref. 2; AAH51158." evidence="11" ref="2">
    <original>K</original>
    <variation>Q</variation>
    <location>
        <position position="412"/>
    </location>
</feature>
<feature type="sequence conflict" description="In Ref. 2; AAH51158." evidence="11" ref="2">
    <original>R</original>
    <variation>H</variation>
    <location>
        <position position="434"/>
    </location>
</feature>
<evidence type="ECO:0000250" key="1">
    <source>
        <dbReference type="UniProtKB" id="F1QLY4"/>
    </source>
</evidence>
<evidence type="ECO:0000250" key="2">
    <source>
        <dbReference type="UniProtKB" id="P35398"/>
    </source>
</evidence>
<evidence type="ECO:0000255" key="3"/>
<evidence type="ECO:0000255" key="4">
    <source>
        <dbReference type="PROSITE-ProRule" id="PRU00407"/>
    </source>
</evidence>
<evidence type="ECO:0000255" key="5">
    <source>
        <dbReference type="PROSITE-ProRule" id="PRU01189"/>
    </source>
</evidence>
<evidence type="ECO:0000255" key="6">
    <source>
        <dbReference type="RuleBase" id="RU004334"/>
    </source>
</evidence>
<evidence type="ECO:0000256" key="7">
    <source>
        <dbReference type="SAM" id="MobiDB-lite"/>
    </source>
</evidence>
<evidence type="ECO:0000269" key="8">
    <source>
    </source>
</evidence>
<evidence type="ECO:0000303" key="9">
    <source>
    </source>
</evidence>
<evidence type="ECO:0000303" key="10">
    <source ref="2"/>
</evidence>
<evidence type="ECO:0000305" key="11"/>
<organism>
    <name type="scientific">Danio rerio</name>
    <name type="common">Zebrafish</name>
    <name type="synonym">Brachydanio rerio</name>
    <dbReference type="NCBI Taxonomy" id="7955"/>
    <lineage>
        <taxon>Eukaryota</taxon>
        <taxon>Metazoa</taxon>
        <taxon>Chordata</taxon>
        <taxon>Craniata</taxon>
        <taxon>Vertebrata</taxon>
        <taxon>Euteleostomi</taxon>
        <taxon>Actinopterygii</taxon>
        <taxon>Neopterygii</taxon>
        <taxon>Teleostei</taxon>
        <taxon>Ostariophysi</taxon>
        <taxon>Cypriniformes</taxon>
        <taxon>Danionidae</taxon>
        <taxon>Danioninae</taxon>
        <taxon>Danio</taxon>
    </lineage>
</organism>
<comment type="function">
    <text evidence="1 2">Nuclear receptor that binds DNA as a monomer to ROR response elements (RORE) (By similarity). Required for proper cerebellum development (By similarity).</text>
</comment>
<comment type="subcellular location">
    <subcellularLocation>
        <location evidence="2 4">Nucleus</location>
    </subcellularLocation>
</comment>
<comment type="alternative products">
    <event type="alternative splicing"/>
    <isoform>
        <id>F1QJF4-1</id>
        <name>1</name>
        <sequence type="displayed"/>
    </isoform>
    <isoform>
        <id>F1QJF4-2</id>
        <name>2</name>
        <sequence type="described" ref="VSP_059964"/>
    </isoform>
</comment>
<comment type="developmental stage">
    <text evidence="8">Detectable from a late gastrula stage (10 hpf). Very weakly expressed in the midbrain region at the 14-somite stage. Expression in the midbrain intensifies and extends along the anterior- posterior axis as embryogenesis proceeded. At 2 dpf, strongly expressed in the developing eyes and midbrain region. At 3 dpf, expressed in the retina.</text>
</comment>
<comment type="similarity">
    <text evidence="3 6">Belongs to the nuclear hormone receptor family.</text>
</comment>
<dbReference type="EMBL" id="BX927082">
    <property type="status" value="NOT_ANNOTATED_CDS"/>
    <property type="molecule type" value="Genomic_DNA"/>
</dbReference>
<dbReference type="EMBL" id="CR388046">
    <property type="status" value="NOT_ANNOTATED_CDS"/>
    <property type="molecule type" value="Genomic_DNA"/>
</dbReference>
<dbReference type="EMBL" id="BC159203">
    <property type="protein sequence ID" value="AAI59204.1"/>
    <property type="molecule type" value="mRNA"/>
</dbReference>
<dbReference type="EMBL" id="BC051158">
    <property type="protein sequence ID" value="AAH51158.1"/>
    <property type="molecule type" value="mRNA"/>
</dbReference>
<dbReference type="RefSeq" id="NP_957361.1">
    <property type="nucleotide sequence ID" value="NM_201067.1"/>
</dbReference>
<dbReference type="SMR" id="F1QJF4"/>
<dbReference type="FunCoup" id="F1QJF4">
    <property type="interactions" value="55"/>
</dbReference>
<dbReference type="STRING" id="7955.ENSDARP00000015111"/>
<dbReference type="PaxDb" id="7955-ENSDARP00000090251"/>
<dbReference type="Ensembl" id="ENSDART00000019140">
    <molecule id="F1QJF4-1"/>
    <property type="protein sequence ID" value="ENSDARP00000015111"/>
    <property type="gene ID" value="ENSDARG00000001910"/>
</dbReference>
<dbReference type="GeneID" id="554722"/>
<dbReference type="KEGG" id="dre:554722"/>
<dbReference type="AGR" id="ZFIN:ZDB-GENE-040426-855"/>
<dbReference type="CTD" id="554722"/>
<dbReference type="ZFIN" id="ZDB-GENE-040426-855">
    <property type="gene designation" value="rorab"/>
</dbReference>
<dbReference type="eggNOG" id="KOG4216">
    <property type="taxonomic scope" value="Eukaryota"/>
</dbReference>
<dbReference type="HOGENOM" id="CLU_007368_2_0_1"/>
<dbReference type="InParanoid" id="F1QJF4"/>
<dbReference type="OrthoDB" id="8832025at2759"/>
<dbReference type="TreeFam" id="TF319910"/>
<dbReference type="PRO" id="PR:F1QJF4"/>
<dbReference type="Proteomes" id="UP000000437">
    <property type="component" value="Alternate scaffold 7"/>
</dbReference>
<dbReference type="Proteomes" id="UP000000437">
    <property type="component" value="Chromosome 7"/>
</dbReference>
<dbReference type="Bgee" id="ENSDARG00000001910">
    <property type="expression patterns" value="Expressed in retina and 18 other cell types or tissues"/>
</dbReference>
<dbReference type="ExpressionAtlas" id="F1QJF4">
    <property type="expression patterns" value="baseline and differential"/>
</dbReference>
<dbReference type="GO" id="GO:0005634">
    <property type="term" value="C:nucleus"/>
    <property type="evidence" value="ECO:0000318"/>
    <property type="project" value="GO_Central"/>
</dbReference>
<dbReference type="GO" id="GO:0004879">
    <property type="term" value="F:nuclear receptor activity"/>
    <property type="evidence" value="ECO:0000318"/>
    <property type="project" value="GO_Central"/>
</dbReference>
<dbReference type="GO" id="GO:0000978">
    <property type="term" value="F:RNA polymerase II cis-regulatory region sequence-specific DNA binding"/>
    <property type="evidence" value="ECO:0000318"/>
    <property type="project" value="GO_Central"/>
</dbReference>
<dbReference type="GO" id="GO:0008270">
    <property type="term" value="F:zinc ion binding"/>
    <property type="evidence" value="ECO:0007669"/>
    <property type="project" value="UniProtKB-KW"/>
</dbReference>
<dbReference type="GO" id="GO:0006357">
    <property type="term" value="P:regulation of transcription by RNA polymerase II"/>
    <property type="evidence" value="ECO:0000318"/>
    <property type="project" value="GO_Central"/>
</dbReference>
<dbReference type="CDD" id="cd06968">
    <property type="entry name" value="NR_DBD_ROR"/>
    <property type="match status" value="1"/>
</dbReference>
<dbReference type="CDD" id="cd06939">
    <property type="entry name" value="NR_LBD_ROR_like"/>
    <property type="match status" value="1"/>
</dbReference>
<dbReference type="FunFam" id="1.10.565.10:FF:000005">
    <property type="entry name" value="Nuclear orphan receptor ROR-beta"/>
    <property type="match status" value="1"/>
</dbReference>
<dbReference type="FunFam" id="3.30.50.10:FF:000003">
    <property type="entry name" value="Nuclear orphan receptor ROR-beta"/>
    <property type="match status" value="1"/>
</dbReference>
<dbReference type="Gene3D" id="3.30.70.1800">
    <property type="match status" value="1"/>
</dbReference>
<dbReference type="Gene3D" id="3.30.50.10">
    <property type="entry name" value="Erythroid Transcription Factor GATA-1, subunit A"/>
    <property type="match status" value="1"/>
</dbReference>
<dbReference type="Gene3D" id="1.10.565.10">
    <property type="entry name" value="Retinoid X Receptor"/>
    <property type="match status" value="1"/>
</dbReference>
<dbReference type="InterPro" id="IPR035500">
    <property type="entry name" value="NHR-like_dom_sf"/>
</dbReference>
<dbReference type="InterPro" id="IPR044101">
    <property type="entry name" value="NR_DBD_ROR"/>
</dbReference>
<dbReference type="InterPro" id="IPR000536">
    <property type="entry name" value="Nucl_hrmn_rcpt_lig-bd"/>
</dbReference>
<dbReference type="InterPro" id="IPR001723">
    <property type="entry name" value="Nuclear_hrmn_rcpt"/>
</dbReference>
<dbReference type="InterPro" id="IPR003079">
    <property type="entry name" value="ROR_rcpt"/>
</dbReference>
<dbReference type="InterPro" id="IPR001628">
    <property type="entry name" value="Znf_hrmn_rcpt"/>
</dbReference>
<dbReference type="InterPro" id="IPR013088">
    <property type="entry name" value="Znf_NHR/GATA"/>
</dbReference>
<dbReference type="PANTHER" id="PTHR45805">
    <property type="entry name" value="NUCLEAR HORMONE RECEPTOR HR3-RELATED"/>
    <property type="match status" value="1"/>
</dbReference>
<dbReference type="PANTHER" id="PTHR45805:SF3">
    <property type="entry name" value="NUCLEAR RECEPTOR ROR-ALPHA"/>
    <property type="match status" value="1"/>
</dbReference>
<dbReference type="Pfam" id="PF00104">
    <property type="entry name" value="Hormone_recep"/>
    <property type="match status" value="1"/>
</dbReference>
<dbReference type="Pfam" id="PF00105">
    <property type="entry name" value="zf-C4"/>
    <property type="match status" value="1"/>
</dbReference>
<dbReference type="PRINTS" id="PR01293">
    <property type="entry name" value="RORNUCRECPTR"/>
</dbReference>
<dbReference type="PRINTS" id="PR00398">
    <property type="entry name" value="STRDHORMONER"/>
</dbReference>
<dbReference type="PRINTS" id="PR00047">
    <property type="entry name" value="STROIDFINGER"/>
</dbReference>
<dbReference type="SMART" id="SM00430">
    <property type="entry name" value="HOLI"/>
    <property type="match status" value="1"/>
</dbReference>
<dbReference type="SMART" id="SM00399">
    <property type="entry name" value="ZnF_C4"/>
    <property type="match status" value="1"/>
</dbReference>
<dbReference type="SUPFAM" id="SSF57716">
    <property type="entry name" value="Glucocorticoid receptor-like (DNA-binding domain)"/>
    <property type="match status" value="1"/>
</dbReference>
<dbReference type="SUPFAM" id="SSF48508">
    <property type="entry name" value="Nuclear receptor ligand-binding domain"/>
    <property type="match status" value="1"/>
</dbReference>
<dbReference type="PROSITE" id="PS51843">
    <property type="entry name" value="NR_LBD"/>
    <property type="match status" value="1"/>
</dbReference>
<dbReference type="PROSITE" id="PS00031">
    <property type="entry name" value="NUCLEAR_REC_DBD_1"/>
    <property type="match status" value="1"/>
</dbReference>
<dbReference type="PROSITE" id="PS51030">
    <property type="entry name" value="NUCLEAR_REC_DBD_2"/>
    <property type="match status" value="1"/>
</dbReference>
<sequence>MYLMITAMKAQIESIPCKICGDKSSGIHYGVITCEGCKGFFRRSQQGTVSYSCPRQKSCLIDRTSRNRCQHCRLQKCLAVGMSRDAVKFGRMSKKQRDSLFAEVQKHRQQQQDDKTGDESEKNQESQAPGEAEPLTPSYALSSSGVTEIPDDLSGYVNGQTQEEGKADSAIGGFYLDIQPSPDQSGLDMDGIKLEPVCDLSSDSGLDQYCCYSNGDASPPHDDLEHLSENICKSHLETCQYLREELQPSNWQTVLQSNLEAYQKKSQEDMWQLCAVKVTEAVQYVVEFAKRIDGFMELCQNDQIVLLKAGSLEVVFVRMCRAYNSQNNTVFFDSKYAGPEVFKALGCDDLISSVFEFAKSLNSLQLSEDEIGLFSAYVLMSADRSWLQEKTRVEKLQQKIKIALQNLLQKNKRDEGILTKLVCKVSTVRMLCRRHMEKLSAFRALYPEMVHTRFPPLYKELFGSDFEQILPQEA</sequence>
<name>RORAB_DANRE</name>
<protein>
    <recommendedName>
        <fullName>Nuclear receptor ROR-alpha B</fullName>
    </recommendedName>
    <alternativeName>
        <fullName evidence="9">Retinoid-related orphan receptor alpha 1</fullName>
    </alternativeName>
    <alternativeName>
        <fullName>Retinoid-related orphan receptor-alpha B</fullName>
    </alternativeName>
</protein>
<gene>
    <name type="primary">rorab</name>
    <name evidence="9" type="synonym">rora1</name>
</gene>